<keyword id="KW-0229">DNA integration</keyword>
<keyword id="KW-0233">DNA recombination</keyword>
<keyword id="KW-0238">DNA-binding</keyword>
<keyword id="KW-0814">Transposable element</keyword>
<dbReference type="EMBL" id="X02590">
    <property type="protein sequence ID" value="CAA26430.1"/>
    <property type="molecule type" value="Genomic_DNA"/>
</dbReference>
<dbReference type="EMBL" id="X61367">
    <property type="protein sequence ID" value="CAA43640.1"/>
    <property type="molecule type" value="Genomic_DNA"/>
</dbReference>
<dbReference type="EMBL" id="X01299">
    <property type="protein sequence ID" value="CAA25628.1"/>
    <property type="molecule type" value="Genomic_DNA"/>
</dbReference>
<dbReference type="PIR" id="B32806">
    <property type="entry name" value="B32806"/>
</dbReference>
<dbReference type="RefSeq" id="WP_001161490.1">
    <property type="nucleotide sequence ID" value="NZ_WXYY01000004.1"/>
</dbReference>
<dbReference type="RefSeq" id="YP_006952171.1">
    <property type="nucleotide sequence ID" value="NC_019056.1"/>
</dbReference>
<dbReference type="RefSeq" id="YP_006952402.1">
    <property type="nucleotide sequence ID" value="NC_019062.1"/>
</dbReference>
<dbReference type="RefSeq" id="YP_009061542.1">
    <property type="nucleotide sequence ID" value="NC_024979.1"/>
</dbReference>
<dbReference type="RefSeq" id="YP_009068486.1">
    <property type="nucleotide sequence ID" value="NC_025141.1"/>
</dbReference>
<dbReference type="RefSeq" id="YP_009068725.1">
    <property type="nucleotide sequence ID" value="NC_025142.1"/>
</dbReference>
<dbReference type="RefSeq" id="YP_009068861.1">
    <property type="nucleotide sequence ID" value="NC_025143.1"/>
</dbReference>
<dbReference type="RefSeq" id="YP_009069129.1">
    <property type="nucleotide sequence ID" value="NC_025144.1"/>
</dbReference>
<dbReference type="RefSeq" id="YP_009070867.1">
    <property type="nucleotide sequence ID" value="NC_025176.1"/>
</dbReference>
<dbReference type="RefSeq" id="YP_190209.1">
    <property type="nucleotide sequence ID" value="NC_006671.1"/>
</dbReference>
<dbReference type="SMR" id="P0C1G2"/>
<dbReference type="GO" id="GO:0003677">
    <property type="term" value="F:DNA binding"/>
    <property type="evidence" value="ECO:0007669"/>
    <property type="project" value="UniProtKB-KW"/>
</dbReference>
<dbReference type="GO" id="GO:0000150">
    <property type="term" value="F:DNA strand exchange activity"/>
    <property type="evidence" value="ECO:0007669"/>
    <property type="project" value="InterPro"/>
</dbReference>
<dbReference type="GO" id="GO:0015074">
    <property type="term" value="P:DNA integration"/>
    <property type="evidence" value="ECO:0007669"/>
    <property type="project" value="UniProtKB-KW"/>
</dbReference>
<dbReference type="CDD" id="cd00569">
    <property type="entry name" value="HTH_Hin_like"/>
    <property type="match status" value="1"/>
</dbReference>
<dbReference type="CDD" id="cd03768">
    <property type="entry name" value="SR_ResInv"/>
    <property type="match status" value="1"/>
</dbReference>
<dbReference type="Gene3D" id="1.10.10.60">
    <property type="entry name" value="Homeodomain-like"/>
    <property type="match status" value="1"/>
</dbReference>
<dbReference type="Gene3D" id="3.40.50.1390">
    <property type="entry name" value="Resolvase, N-terminal catalytic domain"/>
    <property type="match status" value="1"/>
</dbReference>
<dbReference type="InterPro" id="IPR009057">
    <property type="entry name" value="Homeodomain-like_sf"/>
</dbReference>
<dbReference type="InterPro" id="IPR006118">
    <property type="entry name" value="Recombinase_CS"/>
</dbReference>
<dbReference type="InterPro" id="IPR006119">
    <property type="entry name" value="Resolv_N"/>
</dbReference>
<dbReference type="InterPro" id="IPR036162">
    <property type="entry name" value="Resolvase-like_N_sf"/>
</dbReference>
<dbReference type="InterPro" id="IPR006120">
    <property type="entry name" value="Resolvase_HTH_dom"/>
</dbReference>
<dbReference type="InterPro" id="IPR050639">
    <property type="entry name" value="SSR_resolvase"/>
</dbReference>
<dbReference type="PANTHER" id="PTHR30461">
    <property type="entry name" value="DNA-INVERTASE FROM LAMBDOID PROPHAGE"/>
    <property type="match status" value="1"/>
</dbReference>
<dbReference type="PANTHER" id="PTHR30461:SF26">
    <property type="entry name" value="RESOLVASE HOMOLOG YNEB"/>
    <property type="match status" value="1"/>
</dbReference>
<dbReference type="Pfam" id="PF02796">
    <property type="entry name" value="HTH_7"/>
    <property type="match status" value="1"/>
</dbReference>
<dbReference type="Pfam" id="PF00239">
    <property type="entry name" value="Resolvase"/>
    <property type="match status" value="1"/>
</dbReference>
<dbReference type="SMART" id="SM00857">
    <property type="entry name" value="Resolvase"/>
    <property type="match status" value="1"/>
</dbReference>
<dbReference type="SUPFAM" id="SSF46689">
    <property type="entry name" value="Homeodomain-like"/>
    <property type="match status" value="1"/>
</dbReference>
<dbReference type="SUPFAM" id="SSF53041">
    <property type="entry name" value="Resolvase-like"/>
    <property type="match status" value="1"/>
</dbReference>
<dbReference type="PROSITE" id="PS00397">
    <property type="entry name" value="RECOMBINASES_1"/>
    <property type="match status" value="1"/>
</dbReference>
<dbReference type="PROSITE" id="PS00398">
    <property type="entry name" value="RECOMBINASES_2"/>
    <property type="match status" value="1"/>
</dbReference>
<dbReference type="PROSITE" id="PS51736">
    <property type="entry name" value="RECOMBINASES_3"/>
    <property type="match status" value="1"/>
</dbReference>
<gene>
    <name type="primary">tnpR</name>
</gene>
<protein>
    <recommendedName>
        <fullName>Transposons Tn1721 resolvase</fullName>
    </recommendedName>
</protein>
<proteinExistence type="inferred from homology"/>
<evidence type="ECO:0000255" key="1"/>
<evidence type="ECO:0000255" key="2">
    <source>
        <dbReference type="PROSITE-ProRule" id="PRU01072"/>
    </source>
</evidence>
<evidence type="ECO:0000305" key="3"/>
<sequence>MQGHRIGYVRVSSFDQNPERQLEQTQVSKVFTDKASGKDTQRPQLEALLSFVREGDTVVVHSMDRLARNLDDLRRLVQKLTQRGVRIEFLKEGLVFTGEDSPMANLMLSVMGAFAEFERALIRERQREGIALAKQRGAYRGRKKALSDEQAATLRQRATAGEPKAQLAREFNISRETLYQYLRTDD</sequence>
<comment type="function">
    <text>Resolvase catalyzes the resolution (a site-specific recombination) of the cointegrated replicon to yield the final transposition products.</text>
</comment>
<comment type="similarity">
    <text evidence="3">Belongs to the site-specific recombinase resolvase family.</text>
</comment>
<accession>P0C1G2</accession>
<accession>P06692</accession>
<accession>P71417</accession>
<feature type="chain" id="PRO_0000196376" description="Transposons Tn1721 resolvase">
    <location>
        <begin position="1"/>
        <end position="186"/>
    </location>
</feature>
<feature type="domain" description="Resolvase/invertase-type recombinase catalytic" evidence="2">
    <location>
        <begin position="4"/>
        <end position="137"/>
    </location>
</feature>
<feature type="DNA-binding region" description="H-T-H motif" evidence="1">
    <location>
        <begin position="164"/>
        <end position="183"/>
    </location>
</feature>
<feature type="active site" description="O-(5'-phospho-DNA)-serine intermediate" evidence="2">
    <location>
        <position position="12"/>
    </location>
</feature>
<name>TNR7_ECOLX</name>
<organism>
    <name type="scientific">Escherichia coli</name>
    <dbReference type="NCBI Taxonomy" id="562"/>
    <lineage>
        <taxon>Bacteria</taxon>
        <taxon>Pseudomonadati</taxon>
        <taxon>Pseudomonadota</taxon>
        <taxon>Gammaproteobacteria</taxon>
        <taxon>Enterobacterales</taxon>
        <taxon>Enterobacteriaceae</taxon>
        <taxon>Escherichia</taxon>
    </lineage>
</organism>
<reference key="1">
    <citation type="journal article" date="1985" name="Mol. Gen. Genet.">
        <title>Tn1721-encoded resolvase: structure of the tnpR gene and its in vitro functions.</title>
        <authorList>
            <person name="Rogowsky P."/>
            <person name="Schmitt R."/>
        </authorList>
    </citation>
    <scope>NUCLEOTIDE SEQUENCE [GENOMIC DNA]</scope>
    <source>
        <transposon>Tn1721</transposon>
    </source>
</reference>
<reference key="2">
    <citation type="journal article" date="1992" name="Gene">
        <title>Complete nucleotide sequence of Tn1721: gene organization and a novel gene product with features of a chemotaxis protein.</title>
        <authorList>
            <person name="Allmeier H."/>
            <person name="Cresnar B."/>
            <person name="Greck M."/>
            <person name="Schmitt R."/>
        </authorList>
    </citation>
    <scope>NUCLEOTIDE SEQUENCE [GENOMIC DNA]</scope>
    <source>
        <transposon>Tn1721</transposon>
    </source>
</reference>
<reference key="3">
    <citation type="journal article" date="1983" name="Mol. Gen. Genet.">
        <title>DNA sequences of and complementation by the tnpR genes of Tn21, Tn501 and Tn1721.</title>
        <authorList>
            <person name="Diver W.P."/>
            <person name="Grinsted J."/>
            <person name="Fritzinger D.C."/>
            <person name="Brown N.L."/>
            <person name="Altenbuchner J."/>
            <person name="Rogowsky P."/>
            <person name="Schmitt R."/>
        </authorList>
    </citation>
    <scope>NUCLEOTIDE SEQUENCE [GENOMIC DNA] OF 1-27</scope>
    <source>
        <transposon>Tn1721</transposon>
    </source>
</reference>